<organism>
    <name type="scientific">Acanthamoeba castellanii</name>
    <name type="common">Amoeba</name>
    <dbReference type="NCBI Taxonomy" id="5755"/>
    <lineage>
        <taxon>Eukaryota</taxon>
        <taxon>Amoebozoa</taxon>
        <taxon>Discosea</taxon>
        <taxon>Longamoebia</taxon>
        <taxon>Centramoebida</taxon>
        <taxon>Acanthamoebidae</taxon>
        <taxon>Acanthamoeba</taxon>
    </lineage>
</organism>
<reference key="1">
    <citation type="journal article" date="1995" name="J. Mol. Biol.">
        <title>The mitochondrial DNA of the amoeboid protozoon, Acanthamoeba castellanii: complete sequence, gene content and genome organization.</title>
        <authorList>
            <person name="Burger G."/>
            <person name="Plante I."/>
            <person name="Lonergan K.M."/>
            <person name="Gray M.W."/>
        </authorList>
    </citation>
    <scope>NUCLEOTIDE SEQUENCE [GENOMIC DNA]</scope>
    <source>
        <strain>ATCC 30010 / Neff</strain>
    </source>
</reference>
<proteinExistence type="inferred from homology"/>
<sequence>MGHIINPISYRLYNIRYWNNNWFSGSLNYSYLINQDILIDRFFRKFLTTHLDSTNAGIIFVNLKIIRSFNNISLYVYIHDSFLDLLFFNLKKNARFLLIKRLFNKKFYKKYRKALRQNKQLKQGLFMLLKKRVILRYSRKLFFLFIKNKILKIYWESFKTLSLFYLKRFSRSSFLSKIFIIGLSKMNVNANIISEFFFIRLTQYYTIWEVLRNINFLFKSLMKKRKLVKGYKITCSGRFSRKQRTTYSWKAFGSLAFSTVKSKLDYSYKTIALKYSSCTIKVWVRLGKKKSNLVDFVV</sequence>
<gene>
    <name type="primary">RPS3</name>
</gene>
<comment type="subcellular location">
    <subcellularLocation>
        <location>Mitochondrion</location>
    </subcellularLocation>
</comment>
<comment type="similarity">
    <text evidence="1">Belongs to the universal ribosomal protein uS3 family.</text>
</comment>
<dbReference type="EMBL" id="U12386">
    <property type="protein sequence ID" value="AAD11841.1"/>
    <property type="molecule type" value="Genomic_DNA"/>
</dbReference>
<dbReference type="PIR" id="S53849">
    <property type="entry name" value="S53849"/>
</dbReference>
<dbReference type="RefSeq" id="NP_042548.1">
    <property type="nucleotide sequence ID" value="NC_001637.1"/>
</dbReference>
<dbReference type="GeneID" id="1734045"/>
<dbReference type="GO" id="GO:0005739">
    <property type="term" value="C:mitochondrion"/>
    <property type="evidence" value="ECO:0007669"/>
    <property type="project" value="UniProtKB-SubCell"/>
</dbReference>
<dbReference type="GO" id="GO:1990904">
    <property type="term" value="C:ribonucleoprotein complex"/>
    <property type="evidence" value="ECO:0007669"/>
    <property type="project" value="UniProtKB-KW"/>
</dbReference>
<dbReference type="GO" id="GO:0005840">
    <property type="term" value="C:ribosome"/>
    <property type="evidence" value="ECO:0007669"/>
    <property type="project" value="UniProtKB-KW"/>
</dbReference>
<dbReference type="GO" id="GO:0003723">
    <property type="term" value="F:RNA binding"/>
    <property type="evidence" value="ECO:0007669"/>
    <property type="project" value="InterPro"/>
</dbReference>
<dbReference type="GO" id="GO:0003735">
    <property type="term" value="F:structural constituent of ribosome"/>
    <property type="evidence" value="ECO:0007669"/>
    <property type="project" value="InterPro"/>
</dbReference>
<dbReference type="GO" id="GO:0006412">
    <property type="term" value="P:translation"/>
    <property type="evidence" value="ECO:0007669"/>
    <property type="project" value="InterPro"/>
</dbReference>
<dbReference type="Gene3D" id="3.30.1140.32">
    <property type="entry name" value="Ribosomal protein S3, C-terminal domain"/>
    <property type="match status" value="1"/>
</dbReference>
<dbReference type="InterPro" id="IPR009019">
    <property type="entry name" value="KH_sf_prok-type"/>
</dbReference>
<dbReference type="InterPro" id="IPR036419">
    <property type="entry name" value="Ribosomal_S3_C_sf"/>
</dbReference>
<dbReference type="InterPro" id="IPR001351">
    <property type="entry name" value="Ribosomal_uS3_C"/>
</dbReference>
<dbReference type="Pfam" id="PF00189">
    <property type="entry name" value="Ribosomal_S3_C"/>
    <property type="match status" value="1"/>
</dbReference>
<dbReference type="SUPFAM" id="SSF54814">
    <property type="entry name" value="Prokaryotic type KH domain (KH-domain type II)"/>
    <property type="match status" value="1"/>
</dbReference>
<dbReference type="SUPFAM" id="SSF54821">
    <property type="entry name" value="Ribosomal protein S3 C-terminal domain"/>
    <property type="match status" value="1"/>
</dbReference>
<protein>
    <recommendedName>
        <fullName evidence="1">Small ribosomal subunit protein uS3m</fullName>
    </recommendedName>
    <alternativeName>
        <fullName>Ribosomal protein S3, mitochondrial</fullName>
    </alternativeName>
</protein>
<geneLocation type="mitochondrion"/>
<keyword id="KW-0496">Mitochondrion</keyword>
<keyword id="KW-0687">Ribonucleoprotein</keyword>
<keyword id="KW-0689">Ribosomal protein</keyword>
<name>RT03_ACACA</name>
<accession>P46754</accession>
<evidence type="ECO:0000305" key="1"/>
<feature type="chain" id="PRO_0000130319" description="Small ribosomal subunit protein uS3m">
    <location>
        <begin position="1"/>
        <end position="298"/>
    </location>
</feature>